<reference key="1">
    <citation type="submission" date="2004-11" db="EMBL/GenBank/DDBJ databases">
        <authorList>
            <consortium name="The German cDNA consortium"/>
        </authorList>
    </citation>
    <scope>NUCLEOTIDE SEQUENCE [LARGE SCALE MRNA]</scope>
    <source>
        <tissue>Brain cortex</tissue>
        <tissue>Kidney</tissue>
    </source>
</reference>
<keyword id="KW-0007">Acetylation</keyword>
<keyword id="KW-0496">Mitochondrion</keyword>
<keyword id="KW-1135">Mitochondrion nucleoid</keyword>
<keyword id="KW-0507">mRNA processing</keyword>
<keyword id="KW-0597">Phosphoprotein</keyword>
<keyword id="KW-1185">Reference proteome</keyword>
<keyword id="KW-0694">RNA-binding</keyword>
<keyword id="KW-0699">rRNA-binding</keyword>
<keyword id="KW-0809">Transit peptide</keyword>
<proteinExistence type="evidence at transcript level"/>
<name>FAKD5_PONAB</name>
<sequence>MAATLKSLKLLRYQAFCSPSAFGAVRSVSYWNASSTQHGGQDPPGHISLCHSAKKVKNICSTFSSRRIPTTSSARPGLEFSKTSSSKASTLQLGSPRATGIDEENVEVFDSFENLRVFLQLRPEYRVHSYSASETSQLLSVSEGELILHKVRVNQNNLQAQVIVDYLCKLSSLPAEQHPVLLGSTSFALLCQLSVRKIKLFDTQDLINVLKAFVILGIPHSHSMLDVYETKCCHQVWEMSVDQLLLVADLWRYIGRKVPRFLNICCSYLNLRWKDLSLSQLVHLIYVIGENRQVSQDLMQKLESLILKYIDLINLEEVGTICLGFFKSKTNLSEFVMRKIGDLACADMQHLSSHSLVNIVKMFRFTHVDHINFMKQIGEIAPQRIPSLGVQGVMHLTLYCSALRFLDEGVMNAVAASLPPRVAQCRSKDVAKILWSFGTLNYKPPNAEEFYSSLINEIHRKMPEFNQYPEHLPTCLLGLAFLEYFPVELIDFALSPGFVRLAQERTKFDLIKELYTLDGTVVIECPDYRGNRLSTHLQREGSELLWYLAEKDMNSKPEFLETVFLLETMLGGPQYVKHHMILPHTRSSDLEVQLDVNLKPLPFNREATPAENVAKLKCEHVGVSLTDDLMNQLLKGKARGHFQGKTESEPGQQHMELENKAAVPLGGSLRNVADKSGAMEMAGLCPPACMQTPRMKLAIQFTNRNQYCYGSRDLLGLHNMKRRQLARLGYRVVELSYWEWLPLLKRTRLEKLAFLHEKVFTSAL</sequence>
<organism>
    <name type="scientific">Pongo abelii</name>
    <name type="common">Sumatran orangutan</name>
    <name type="synonym">Pongo pygmaeus abelii</name>
    <dbReference type="NCBI Taxonomy" id="9601"/>
    <lineage>
        <taxon>Eukaryota</taxon>
        <taxon>Metazoa</taxon>
        <taxon>Chordata</taxon>
        <taxon>Craniata</taxon>
        <taxon>Vertebrata</taxon>
        <taxon>Euteleostomi</taxon>
        <taxon>Mammalia</taxon>
        <taxon>Eutheria</taxon>
        <taxon>Euarchontoglires</taxon>
        <taxon>Primates</taxon>
        <taxon>Haplorrhini</taxon>
        <taxon>Catarrhini</taxon>
        <taxon>Hominidae</taxon>
        <taxon>Pongo</taxon>
    </lineage>
</organism>
<gene>
    <name type="primary">FASTKD5</name>
</gene>
<protein>
    <recommendedName>
        <fullName>FAST kinase domain-containing protein 5, mitochondrial</fullName>
    </recommendedName>
</protein>
<dbReference type="EMBL" id="CR857170">
    <property type="protein sequence ID" value="CAH89471.1"/>
    <property type="molecule type" value="mRNA"/>
</dbReference>
<dbReference type="EMBL" id="CR860676">
    <property type="protein sequence ID" value="CAH92792.1"/>
    <property type="molecule type" value="mRNA"/>
</dbReference>
<dbReference type="RefSeq" id="NP_001124632.1">
    <property type="nucleotide sequence ID" value="NM_001131160.1"/>
</dbReference>
<dbReference type="RefSeq" id="XP_024094219.2">
    <property type="nucleotide sequence ID" value="XM_024238451.3"/>
</dbReference>
<dbReference type="SMR" id="Q5RFI6"/>
<dbReference type="FunCoup" id="Q5RFI6">
    <property type="interactions" value="1067"/>
</dbReference>
<dbReference type="GeneID" id="100171471"/>
<dbReference type="KEGG" id="pon:100171471"/>
<dbReference type="CTD" id="60493"/>
<dbReference type="InParanoid" id="Q5RFI6"/>
<dbReference type="OrthoDB" id="10064757at2759"/>
<dbReference type="Proteomes" id="UP000001595">
    <property type="component" value="Unplaced"/>
</dbReference>
<dbReference type="GO" id="GO:0042645">
    <property type="term" value="C:mitochondrial nucleoid"/>
    <property type="evidence" value="ECO:0000250"/>
    <property type="project" value="UniProtKB"/>
</dbReference>
<dbReference type="GO" id="GO:0005739">
    <property type="term" value="C:mitochondrion"/>
    <property type="evidence" value="ECO:0000250"/>
    <property type="project" value="UniProtKB"/>
</dbReference>
<dbReference type="GO" id="GO:0035770">
    <property type="term" value="C:ribonucleoprotein granule"/>
    <property type="evidence" value="ECO:0000250"/>
    <property type="project" value="UniProtKB"/>
</dbReference>
<dbReference type="GO" id="GO:0019843">
    <property type="term" value="F:rRNA binding"/>
    <property type="evidence" value="ECO:0000250"/>
    <property type="project" value="UniProtKB"/>
</dbReference>
<dbReference type="GO" id="GO:0000963">
    <property type="term" value="P:mitochondrial RNA processing"/>
    <property type="evidence" value="ECO:0000250"/>
    <property type="project" value="UniProtKB"/>
</dbReference>
<dbReference type="GO" id="GO:0006397">
    <property type="term" value="P:mRNA processing"/>
    <property type="evidence" value="ECO:0007669"/>
    <property type="project" value="UniProtKB-KW"/>
</dbReference>
<dbReference type="GO" id="GO:0044528">
    <property type="term" value="P:regulation of mitochondrial mRNA stability"/>
    <property type="evidence" value="ECO:0007669"/>
    <property type="project" value="InterPro"/>
</dbReference>
<dbReference type="InterPro" id="IPR013579">
    <property type="entry name" value="FAST_2"/>
</dbReference>
<dbReference type="InterPro" id="IPR050870">
    <property type="entry name" value="FAST_kinase"/>
</dbReference>
<dbReference type="InterPro" id="IPR010622">
    <property type="entry name" value="FAST_Leu-rich"/>
</dbReference>
<dbReference type="InterPro" id="IPR013584">
    <property type="entry name" value="RAP"/>
</dbReference>
<dbReference type="PANTHER" id="PTHR21228:SF70">
    <property type="entry name" value="FAST KINASE DOMAIN-CONTAINING PROTEIN 5, MITOCHONDRIAL"/>
    <property type="match status" value="1"/>
</dbReference>
<dbReference type="PANTHER" id="PTHR21228">
    <property type="entry name" value="FAST LEU-RICH DOMAIN-CONTAINING"/>
    <property type="match status" value="1"/>
</dbReference>
<dbReference type="Pfam" id="PF06743">
    <property type="entry name" value="FAST_1"/>
    <property type="match status" value="1"/>
</dbReference>
<dbReference type="Pfam" id="PF08368">
    <property type="entry name" value="FAST_2"/>
    <property type="match status" value="1"/>
</dbReference>
<dbReference type="Pfam" id="PF08373">
    <property type="entry name" value="RAP"/>
    <property type="match status" value="1"/>
</dbReference>
<dbReference type="SMART" id="SM00952">
    <property type="entry name" value="RAP"/>
    <property type="match status" value="1"/>
</dbReference>
<dbReference type="PROSITE" id="PS51286">
    <property type="entry name" value="RAP"/>
    <property type="match status" value="1"/>
</dbReference>
<feature type="transit peptide" description="Mitochondrion" evidence="2">
    <location>
        <begin position="1"/>
        <end position="27"/>
    </location>
</feature>
<feature type="chain" id="PRO_0000284982" description="FAST kinase domain-containing protein 5, mitochondrial">
    <location>
        <begin position="28"/>
        <end position="764"/>
    </location>
</feature>
<feature type="domain" description="RAP" evidence="3">
    <location>
        <begin position="697"/>
        <end position="757"/>
    </location>
</feature>
<feature type="region of interest" description="Disordered" evidence="4">
    <location>
        <begin position="68"/>
        <end position="94"/>
    </location>
</feature>
<feature type="compositionally biased region" description="Polar residues" evidence="4">
    <location>
        <begin position="81"/>
        <end position="93"/>
    </location>
</feature>
<feature type="modified residue" description="Phosphoserine" evidence="1">
    <location>
        <position position="95"/>
    </location>
</feature>
<feature type="modified residue" description="N6-acetyllysine" evidence="1">
    <location>
        <position position="507"/>
    </location>
</feature>
<feature type="sequence conflict" description="In Ref. 1; CAH92792." evidence="5" ref="1">
    <original>S</original>
    <variation>G</variation>
    <location>
        <position position="186"/>
    </location>
</feature>
<feature type="sequence conflict" description="In Ref. 1; CAH92792." evidence="5" ref="1">
    <original>V</original>
    <variation>A</variation>
    <location>
        <position position="592"/>
    </location>
</feature>
<comment type="function">
    <text evidence="1">Plays an important role in the processing of non-canonical mitochondrial mRNA precursors.</text>
</comment>
<comment type="subunit">
    <text evidence="1">Found in a complex with GRSF1, DDX28, DHX30 and FASTKD2. Associates with the 12S mitochondrial rRNA (12S mt-rRNA).</text>
</comment>
<comment type="subcellular location">
    <subcellularLocation>
        <location evidence="1">Mitochondrion matrix</location>
        <location evidence="1">Mitochondrion nucleoid</location>
    </subcellularLocation>
    <text evidence="1">Localizes to mitochondrial RNA granules found in close proximity to the mitochondrial nucleoids.</text>
</comment>
<comment type="similarity">
    <text evidence="5">Belongs to the FAST kinase family.</text>
</comment>
<accession>Q5RFI6</accession>
<accession>Q5R624</accession>
<evidence type="ECO:0000250" key="1">
    <source>
        <dbReference type="UniProtKB" id="Q7L8L6"/>
    </source>
</evidence>
<evidence type="ECO:0000255" key="2"/>
<evidence type="ECO:0000255" key="3">
    <source>
        <dbReference type="PROSITE-ProRule" id="PRU00619"/>
    </source>
</evidence>
<evidence type="ECO:0000256" key="4">
    <source>
        <dbReference type="SAM" id="MobiDB-lite"/>
    </source>
</evidence>
<evidence type="ECO:0000305" key="5"/>